<gene>
    <name evidence="1" type="primary">PIGU</name>
    <name type="synonym">CDC91L1</name>
</gene>
<reference key="1">
    <citation type="journal article" date="2003" name="Mol. Biol. Cell">
        <title>Human PIG-U and yeast Cdc91p are the fifth subunit of GPI transamidase that attaches GPI-anchors to proteins.</title>
        <authorList>
            <person name="Hong Y."/>
            <person name="Ohishi K."/>
            <person name="Kang J.Y."/>
            <person name="Tanaka S."/>
            <person name="Inoue N."/>
            <person name="Nishimura J."/>
            <person name="Maeda Y."/>
            <person name="Kinoshita T."/>
        </authorList>
    </citation>
    <scope>NUCLEOTIDE SEQUENCE [MRNA]</scope>
    <scope>FUNCTION</scope>
    <scope>PATHWAY</scope>
    <scope>SUBUNIT</scope>
    <scope>MUTAGENESIS OF 274-PHE-TRP-275</scope>
</reference>
<reference key="2">
    <citation type="journal article" date="2011" name="Nat. Biotechnol.">
        <title>The genomic sequence of the Chinese hamster ovary (CHO)-K1 cell line.</title>
        <authorList>
            <person name="Xu X."/>
            <person name="Nagarajan H."/>
            <person name="Lewis N.E."/>
            <person name="Pan S."/>
            <person name="Cai Z."/>
            <person name="Liu X."/>
            <person name="Chen W."/>
            <person name="Xie M."/>
            <person name="Wang W."/>
            <person name="Hammond S."/>
            <person name="Andersen M.R."/>
            <person name="Neff N."/>
            <person name="Passarelli B."/>
            <person name="Koh W."/>
            <person name="Fan H.C."/>
            <person name="Wang J."/>
            <person name="Gui Y."/>
            <person name="Lee K.H."/>
            <person name="Betenbaugh M.J."/>
            <person name="Quake S.R."/>
            <person name="Famili I."/>
            <person name="Palsson B.O."/>
            <person name="Wang J."/>
        </authorList>
    </citation>
    <scope>NUCLEOTIDE SEQUENCE [LARGE SCALE GENOMIC DNA]</scope>
</reference>
<feature type="chain" id="PRO_0000121393" description="GPI-anchor transamidase component PIGU">
    <location>
        <begin position="1"/>
        <end position="435"/>
    </location>
</feature>
<feature type="topological domain" description="Cytoplasmic" evidence="3">
    <location>
        <begin position="1"/>
        <end position="3"/>
    </location>
</feature>
<feature type="transmembrane region" description="Helical" evidence="1">
    <location>
        <begin position="4"/>
        <end position="22"/>
    </location>
</feature>
<feature type="topological domain" description="Lumenal" evidence="3">
    <location>
        <begin position="23"/>
        <end position="78"/>
    </location>
</feature>
<feature type="transmembrane region" description="Helical" evidence="1">
    <location>
        <begin position="79"/>
        <end position="99"/>
    </location>
</feature>
<feature type="topological domain" description="Cytoplasmic" evidence="3">
    <location>
        <begin position="100"/>
        <end position="136"/>
    </location>
</feature>
<feature type="transmembrane region" description="Helical" evidence="1">
    <location>
        <begin position="137"/>
        <end position="158"/>
    </location>
</feature>
<feature type="transmembrane region" description="Helical" evidence="1">
    <location>
        <begin position="159"/>
        <end position="178"/>
    </location>
</feature>
<feature type="transmembrane region" description="Helical" evidence="1">
    <location>
        <begin position="179"/>
        <end position="194"/>
    </location>
</feature>
<feature type="transmembrane region" description="Helical" evidence="1">
    <location>
        <begin position="195"/>
        <end position="205"/>
    </location>
</feature>
<feature type="topological domain" description="Cytoplasmic" evidence="3">
    <location>
        <begin position="206"/>
        <end position="222"/>
    </location>
</feature>
<feature type="transmembrane region" description="Helical" evidence="1">
    <location>
        <begin position="223"/>
        <end position="244"/>
    </location>
</feature>
<feature type="topological domain" description="Lumenal" evidence="3">
    <location>
        <begin position="245"/>
        <end position="286"/>
    </location>
</feature>
<feature type="transmembrane region" description="Helical" evidence="1">
    <location>
        <begin position="287"/>
        <end position="306"/>
    </location>
</feature>
<feature type="topological domain" description="Cytoplasmic" evidence="3">
    <location>
        <begin position="307"/>
        <end position="311"/>
    </location>
</feature>
<feature type="transmembrane region" description="Helical" evidence="1">
    <location>
        <begin position="312"/>
        <end position="331"/>
    </location>
</feature>
<feature type="transmembrane region" description="Helical" evidence="1">
    <location>
        <begin position="332"/>
        <end position="345"/>
    </location>
</feature>
<feature type="topological domain" description="Cytoplasmic" evidence="3">
    <location>
        <begin position="346"/>
        <end position="354"/>
    </location>
</feature>
<feature type="transmembrane region" description="Helical" evidence="1">
    <location>
        <begin position="355"/>
        <end position="372"/>
    </location>
</feature>
<feature type="topological domain" description="Lumenal" evidence="3">
    <location>
        <begin position="373"/>
        <end position="384"/>
    </location>
</feature>
<feature type="transmembrane region" description="Helical" evidence="1">
    <location>
        <begin position="385"/>
        <end position="406"/>
    </location>
</feature>
<feature type="topological domain" description="Cytoplasmic" evidence="3">
    <location>
        <begin position="407"/>
        <end position="435"/>
    </location>
</feature>
<feature type="binding site" evidence="1">
    <location>
        <position position="216"/>
    </location>
    <ligand>
        <name>a cardiolipin</name>
        <dbReference type="ChEBI" id="CHEBI:62237"/>
    </ligand>
</feature>
<feature type="binding site" evidence="1">
    <location>
        <position position="309"/>
    </location>
    <ligand>
        <name>a cardiolipin</name>
        <dbReference type="ChEBI" id="CHEBI:62237"/>
    </ligand>
</feature>
<feature type="binding site" evidence="1">
    <location>
        <position position="383"/>
    </location>
    <ligand>
        <name>a 2-acyl-6-[6-phosphoethanolamine-alpha-D-mannosyl-(1-&gt;2)-6-phosphoethanolamine-alpha-D-mannosyl-(1-&gt;6)-2-phosphoethanolamine-alpha-D-mannosyl-(1-&gt;4)-alpha-D-glucosaminyl]-1-(1-radyl,2-acyl-sn-glycero-3-phospho)-1D-myo-inositol</name>
        <dbReference type="ChEBI" id="CHEBI:144080"/>
    </ligand>
</feature>
<feature type="binding site" evidence="1">
    <location>
        <position position="385"/>
    </location>
    <ligand>
        <name>a 2-acyl-6-[6-phosphoethanolamine-alpha-D-mannosyl-(1-&gt;2)-6-phosphoethanolamine-alpha-D-mannosyl-(1-&gt;6)-2-phosphoethanolamine-alpha-D-mannosyl-(1-&gt;4)-alpha-D-glucosaminyl]-1-(1-radyl,2-acyl-sn-glycero-3-phospho)-1D-myo-inositol</name>
        <dbReference type="ChEBI" id="CHEBI:144080"/>
    </ligand>
</feature>
<feature type="mutagenesis site" description="Loss of function." evidence="2">
    <original>FW</original>
    <variation>LL</variation>
    <location>
        <begin position="274"/>
        <end position="275"/>
    </location>
</feature>
<name>PIGU_CRIGR</name>
<evidence type="ECO:0000250" key="1">
    <source>
        <dbReference type="UniProtKB" id="Q9H490"/>
    </source>
</evidence>
<evidence type="ECO:0000269" key="2">
    <source>
    </source>
</evidence>
<evidence type="ECO:0000305" key="3"/>
<proteinExistence type="evidence at protein level"/>
<keyword id="KW-0256">Endoplasmic reticulum</keyword>
<keyword id="KW-0337">GPI-anchor biosynthesis</keyword>
<keyword id="KW-0472">Membrane</keyword>
<keyword id="KW-1185">Reference proteome</keyword>
<keyword id="KW-0812">Transmembrane</keyword>
<keyword id="KW-1133">Transmembrane helix</keyword>
<protein>
    <recommendedName>
        <fullName evidence="1">GPI-anchor transamidase component PIGU</fullName>
    </recommendedName>
    <alternativeName>
        <fullName>Cell division cycle protein 91-like 1</fullName>
        <shortName>Protein CDC91-like 1</shortName>
    </alternativeName>
    <alternativeName>
        <fullName>GPI transamidase component PIG-U</fullName>
    </alternativeName>
    <alternativeName>
        <fullName>Phosphatidylinositol glycan anchor biosynthesis class U protein</fullName>
    </alternativeName>
</protein>
<accession>Q8CHJ0</accession>
<accession>G3HAP2</accession>
<comment type="function">
    <text evidence="1 2">Component of the glycosylphosphatidylinositol-anchor (GPI-anchor) transamidase (GPI-T) complex that catalyzes the formation of the linkage between a proprotein and a GPI-anchor and participates in GPI anchored protein biosynthesis (PubMed:12802054). Binds the lipid portion of GPI-anchor. May act as an organizer in the transmembrane layer to recruit other subunits, and thus is essential for assembly of the complex (By similarity).</text>
</comment>
<comment type="pathway">
    <text evidence="2">Glycolipid biosynthesis; glycosylphosphatidylinositol-anchor biosynthesis.</text>
</comment>
<comment type="subunit">
    <text evidence="2">Heteropentamer. Part of the GPI-anchor transamidase complex, consisting of PIGK, PIGT, PIGS, PIGU and GAA1.</text>
</comment>
<comment type="subcellular location">
    <subcellularLocation>
        <location evidence="1">Endoplasmic reticulum membrane</location>
        <topology evidence="1">Multi-pass membrane protein</topology>
    </subcellularLocation>
</comment>
<comment type="similarity">
    <text evidence="3">Belongs to the PIGU family.</text>
</comment>
<sequence length="435" mass="49980">MAAPLALVLVVAVTVRAALFRSSLAEFISERVEVVSPLSSWKRVVEGLSLLDLGVSPYSGAVFHETPLIIYLFHFLIDYAELVFMITDALTAIALYFAIQDFNKVVFKKQKLLLELDQYAPDVAELIRTPMEMRYIPLKVALFYLLNPYTILSCVAKSTCAINNTLIAFFILTTIKGSVFLSAIFLALATYQTLYPVTLFAPGLLYLLQRQYIPVKVKSKAFWIFSWEYAMMYIGSLVVIVCLSFFLLSSWDFIPAVYGFILSVPDLTPNIGLFWYFFAEMFEHFSLFFVCVFQINVFFYTVPLAIKLKEHPIFFMFIQIAIISIFKSYPTVGDVALYMAFFPVWNHLYRFLRNVFVLTCIIVVCSLLFPVLWHLWIYAGSANSNFFYAITLTFNVGQILLISDYFYAFLRREYYLTHGLYLTAKDGTEAMLVLK</sequence>
<organism>
    <name type="scientific">Cricetulus griseus</name>
    <name type="common">Chinese hamster</name>
    <name type="synonym">Cricetulus barabensis griseus</name>
    <dbReference type="NCBI Taxonomy" id="10029"/>
    <lineage>
        <taxon>Eukaryota</taxon>
        <taxon>Metazoa</taxon>
        <taxon>Chordata</taxon>
        <taxon>Craniata</taxon>
        <taxon>Vertebrata</taxon>
        <taxon>Euteleostomi</taxon>
        <taxon>Mammalia</taxon>
        <taxon>Eutheria</taxon>
        <taxon>Euarchontoglires</taxon>
        <taxon>Glires</taxon>
        <taxon>Rodentia</taxon>
        <taxon>Myomorpha</taxon>
        <taxon>Muroidea</taxon>
        <taxon>Cricetidae</taxon>
        <taxon>Cricetinae</taxon>
        <taxon>Cricetulus</taxon>
    </lineage>
</organism>
<dbReference type="EMBL" id="AB086843">
    <property type="protein sequence ID" value="BAC53627.1"/>
    <property type="molecule type" value="mRNA"/>
</dbReference>
<dbReference type="EMBL" id="JH000254">
    <property type="protein sequence ID" value="EGW02760.1"/>
    <property type="molecule type" value="Genomic_DNA"/>
</dbReference>
<dbReference type="RefSeq" id="NP_001233736.1">
    <property type="nucleotide sequence ID" value="NM_001246807.1"/>
</dbReference>
<dbReference type="SMR" id="Q8CHJ0"/>
<dbReference type="PaxDb" id="10029-NP_001233736.1"/>
<dbReference type="Ensembl" id="ENSCGRT00001016898.1">
    <property type="protein sequence ID" value="ENSCGRP00001012663.1"/>
    <property type="gene ID" value="ENSCGRG00001013977.1"/>
</dbReference>
<dbReference type="GeneID" id="100689380"/>
<dbReference type="KEGG" id="cge:100689380"/>
<dbReference type="CTD" id="128869"/>
<dbReference type="eggNOG" id="KOG2552">
    <property type="taxonomic scope" value="Eukaryota"/>
</dbReference>
<dbReference type="GeneTree" id="ENSGT00390000014941"/>
<dbReference type="InParanoid" id="G3HAP2"/>
<dbReference type="OMA" id="ALWHLWI"/>
<dbReference type="OrthoDB" id="549017at2759"/>
<dbReference type="UniPathway" id="UPA00196"/>
<dbReference type="Proteomes" id="UP000001075">
    <property type="component" value="Unassembled WGS sequence"/>
</dbReference>
<dbReference type="Proteomes" id="UP000694386">
    <property type="component" value="Unplaced"/>
</dbReference>
<dbReference type="Proteomes" id="UP001108280">
    <property type="component" value="Chromosome 6"/>
</dbReference>
<dbReference type="GO" id="GO:0042765">
    <property type="term" value="C:GPI-anchor transamidase complex"/>
    <property type="evidence" value="ECO:0000314"/>
    <property type="project" value="UniProtKB"/>
</dbReference>
<dbReference type="GO" id="GO:0005886">
    <property type="term" value="C:plasma membrane"/>
    <property type="evidence" value="ECO:0007669"/>
    <property type="project" value="Ensembl"/>
</dbReference>
<dbReference type="GO" id="GO:0034235">
    <property type="term" value="F:GPI anchor binding"/>
    <property type="evidence" value="ECO:0007669"/>
    <property type="project" value="Ensembl"/>
</dbReference>
<dbReference type="GO" id="GO:0003923">
    <property type="term" value="F:GPI-anchor transamidase activity"/>
    <property type="evidence" value="ECO:0007669"/>
    <property type="project" value="Ensembl"/>
</dbReference>
<dbReference type="GO" id="GO:0016255">
    <property type="term" value="P:attachment of GPI anchor to protein"/>
    <property type="evidence" value="ECO:0000250"/>
    <property type="project" value="UniProtKB"/>
</dbReference>
<dbReference type="GO" id="GO:0006506">
    <property type="term" value="P:GPI anchor biosynthetic process"/>
    <property type="evidence" value="ECO:0007669"/>
    <property type="project" value="UniProtKB-UniPathway"/>
</dbReference>
<dbReference type="GO" id="GO:0180046">
    <property type="term" value="P:GPI anchored protein biosynthesis"/>
    <property type="evidence" value="ECO:0000314"/>
    <property type="project" value="UniProtKB"/>
</dbReference>
<dbReference type="GO" id="GO:0046425">
    <property type="term" value="P:regulation of receptor signaling pathway via JAK-STAT"/>
    <property type="evidence" value="ECO:0007669"/>
    <property type="project" value="Ensembl"/>
</dbReference>
<dbReference type="InterPro" id="IPR009600">
    <property type="entry name" value="PIG-U"/>
</dbReference>
<dbReference type="PANTHER" id="PTHR13121">
    <property type="entry name" value="GPI TRANSAMIDASE COMPONENT PIG-U"/>
    <property type="match status" value="1"/>
</dbReference>
<dbReference type="PANTHER" id="PTHR13121:SF0">
    <property type="entry name" value="PHOSPHATIDYLINOSITOL GLYCAN ANCHOR BIOSYNTHESIS CLASS U PROTEIN"/>
    <property type="match status" value="1"/>
</dbReference>
<dbReference type="Pfam" id="PF06728">
    <property type="entry name" value="PIG-U"/>
    <property type="match status" value="1"/>
</dbReference>